<gene>
    <name evidence="1" type="primary">alaS</name>
    <name type="ordered locus">ECH_0981</name>
</gene>
<feature type="chain" id="PRO_0000347591" description="Alanine--tRNA ligase">
    <location>
        <begin position="1"/>
        <end position="887"/>
    </location>
</feature>
<feature type="binding site" evidence="1">
    <location>
        <position position="581"/>
    </location>
    <ligand>
        <name>Zn(2+)</name>
        <dbReference type="ChEBI" id="CHEBI:29105"/>
    </ligand>
</feature>
<feature type="binding site" evidence="1">
    <location>
        <position position="585"/>
    </location>
    <ligand>
        <name>Zn(2+)</name>
        <dbReference type="ChEBI" id="CHEBI:29105"/>
    </ligand>
</feature>
<feature type="binding site" evidence="1">
    <location>
        <position position="683"/>
    </location>
    <ligand>
        <name>Zn(2+)</name>
        <dbReference type="ChEBI" id="CHEBI:29105"/>
    </ligand>
</feature>
<feature type="binding site" evidence="1">
    <location>
        <position position="687"/>
    </location>
    <ligand>
        <name>Zn(2+)</name>
        <dbReference type="ChEBI" id="CHEBI:29105"/>
    </ligand>
</feature>
<organism>
    <name type="scientific">Ehrlichia chaffeensis (strain ATCC CRL-10679 / Arkansas)</name>
    <dbReference type="NCBI Taxonomy" id="205920"/>
    <lineage>
        <taxon>Bacteria</taxon>
        <taxon>Pseudomonadati</taxon>
        <taxon>Pseudomonadota</taxon>
        <taxon>Alphaproteobacteria</taxon>
        <taxon>Rickettsiales</taxon>
        <taxon>Anaplasmataceae</taxon>
        <taxon>Ehrlichia</taxon>
    </lineage>
</organism>
<reference key="1">
    <citation type="journal article" date="2006" name="PLoS Genet.">
        <title>Comparative genomics of emerging human ehrlichiosis agents.</title>
        <authorList>
            <person name="Dunning Hotopp J.C."/>
            <person name="Lin M."/>
            <person name="Madupu R."/>
            <person name="Crabtree J."/>
            <person name="Angiuoli S.V."/>
            <person name="Eisen J.A."/>
            <person name="Seshadri R."/>
            <person name="Ren Q."/>
            <person name="Wu M."/>
            <person name="Utterback T.R."/>
            <person name="Smith S."/>
            <person name="Lewis M."/>
            <person name="Khouri H."/>
            <person name="Zhang C."/>
            <person name="Niu H."/>
            <person name="Lin Q."/>
            <person name="Ohashi N."/>
            <person name="Zhi N."/>
            <person name="Nelson W.C."/>
            <person name="Brinkac L.M."/>
            <person name="Dodson R.J."/>
            <person name="Rosovitz M.J."/>
            <person name="Sundaram J.P."/>
            <person name="Daugherty S.C."/>
            <person name="Davidsen T."/>
            <person name="Durkin A.S."/>
            <person name="Gwinn M.L."/>
            <person name="Haft D.H."/>
            <person name="Selengut J.D."/>
            <person name="Sullivan S.A."/>
            <person name="Zafar N."/>
            <person name="Zhou L."/>
            <person name="Benahmed F."/>
            <person name="Forberger H."/>
            <person name="Halpin R."/>
            <person name="Mulligan S."/>
            <person name="Robinson J."/>
            <person name="White O."/>
            <person name="Rikihisa Y."/>
            <person name="Tettelin H."/>
        </authorList>
    </citation>
    <scope>NUCLEOTIDE SEQUENCE [LARGE SCALE GENOMIC DNA]</scope>
    <source>
        <strain>ATCC CRL-10679 / Arkansas</strain>
    </source>
</reference>
<sequence length="887" mass="99782">MMKNNLVSNLRKSFIDFFAKNGHQVFPSSPLILKDDPSLLFTNAGMVQFKQMFTNPNNANVNTATSSQKCLRVGGKHNDLENVGYTNRHHTFFEMLGNFSFGSYFKEGAIEFAWNFVIKELSLSKDRLYFTVYHDDQEAFDLWKKISGVSDSRIIKITTSDNFWSMGNTGPCGPCSEIFYDYGDNVKGGLPGTPEEDGARFTEIWNLVFMQYDRKLDGELCVLPKKCIDTGMGLERIAAVMQGVHDNYDISLFKALIAASKEQSGNSTNELAHRVIADHVRSAAFLIAEGLTPGNEGRNYILRRIIRRAARYVYMLKYDDALMYKVFPTLIDEESCGYMADYYPELIHAKDLIMSILKIEEENFKDTLVRALPLLEKELMNLSSGDILSGDIVFKLYDTYGFPVDITLDIIKEKGVKFDEQGFYDNMNKQKERSKLNHSIKSDQQLKEEFWVDIKERCGSTKFVGYERYDTKATVLSIVCGGDKNVEIANVGDKVSILLDITPFYAESGGQKGDVGIFNVIVRQEKELFANDNIAEVIDTKKVLDTLYIHECIIKQGSLMVGDVIFAKIDCERRRNLCANHSATHLLHYVLKSEIDSSIMQKGSLVSDEKLRFDFSYGVALTKEQLTLIEDKMYSLISGNNPVISHVCDLKDAVAGGAVALFTEKYEEHGVRVVSIKDSKELCCGTHVKYTSEIGCFKIVSEASIACGIRRIEAVTGRYAIDYFRQQEKMLNSIAESVKVPVDNVLVQIDKLDKKNQELEQKLSDVYFDMINLQGVNTEKIGNVDFLYSNLSNIPVNVMRKFINKHLTADRIILFANVVGQNVVCVVGVGNSLHCKVKAVDFVKMIGTMVKSKGGGNAQLAQINGEYVKEIDIMSNVKSKLVDILSN</sequence>
<keyword id="KW-0030">Aminoacyl-tRNA synthetase</keyword>
<keyword id="KW-0067">ATP-binding</keyword>
<keyword id="KW-0963">Cytoplasm</keyword>
<keyword id="KW-0436">Ligase</keyword>
<keyword id="KW-0479">Metal-binding</keyword>
<keyword id="KW-0547">Nucleotide-binding</keyword>
<keyword id="KW-0648">Protein biosynthesis</keyword>
<keyword id="KW-1185">Reference proteome</keyword>
<keyword id="KW-0694">RNA-binding</keyword>
<keyword id="KW-0820">tRNA-binding</keyword>
<keyword id="KW-0862">Zinc</keyword>
<comment type="function">
    <text evidence="1">Catalyzes the attachment of alanine to tRNA(Ala) in a two-step reaction: alanine is first activated by ATP to form Ala-AMP and then transferred to the acceptor end of tRNA(Ala). Also edits incorrectly charged Ser-tRNA(Ala) and Gly-tRNA(Ala) via its editing domain.</text>
</comment>
<comment type="catalytic activity">
    <reaction evidence="1">
        <text>tRNA(Ala) + L-alanine + ATP = L-alanyl-tRNA(Ala) + AMP + diphosphate</text>
        <dbReference type="Rhea" id="RHEA:12540"/>
        <dbReference type="Rhea" id="RHEA-COMP:9657"/>
        <dbReference type="Rhea" id="RHEA-COMP:9923"/>
        <dbReference type="ChEBI" id="CHEBI:30616"/>
        <dbReference type="ChEBI" id="CHEBI:33019"/>
        <dbReference type="ChEBI" id="CHEBI:57972"/>
        <dbReference type="ChEBI" id="CHEBI:78442"/>
        <dbReference type="ChEBI" id="CHEBI:78497"/>
        <dbReference type="ChEBI" id="CHEBI:456215"/>
        <dbReference type="EC" id="6.1.1.7"/>
    </reaction>
</comment>
<comment type="cofactor">
    <cofactor evidence="1">
        <name>Zn(2+)</name>
        <dbReference type="ChEBI" id="CHEBI:29105"/>
    </cofactor>
    <text evidence="1">Binds 1 zinc ion per subunit.</text>
</comment>
<comment type="subcellular location">
    <subcellularLocation>
        <location evidence="1">Cytoplasm</location>
    </subcellularLocation>
</comment>
<comment type="domain">
    <text evidence="1">Consists of three domains; the N-terminal catalytic domain, the editing domain and the C-terminal C-Ala domain. The editing domain removes incorrectly charged amino acids, while the C-Ala domain, along with tRNA(Ala), serves as a bridge to cooperatively bring together the editing and aminoacylation centers thus stimulating deacylation of misacylated tRNAs.</text>
</comment>
<comment type="similarity">
    <text evidence="1">Belongs to the class-II aminoacyl-tRNA synthetase family.</text>
</comment>
<proteinExistence type="inferred from homology"/>
<accession>Q2GFL5</accession>
<name>SYA_EHRCR</name>
<dbReference type="EC" id="6.1.1.7" evidence="1"/>
<dbReference type="EMBL" id="CP000236">
    <property type="protein sequence ID" value="ABD45152.1"/>
    <property type="molecule type" value="Genomic_DNA"/>
</dbReference>
<dbReference type="RefSeq" id="WP_011452930.1">
    <property type="nucleotide sequence ID" value="NC_007799.1"/>
</dbReference>
<dbReference type="SMR" id="Q2GFL5"/>
<dbReference type="STRING" id="205920.ECH_0981"/>
<dbReference type="KEGG" id="ech:ECH_0981"/>
<dbReference type="eggNOG" id="COG0013">
    <property type="taxonomic scope" value="Bacteria"/>
</dbReference>
<dbReference type="HOGENOM" id="CLU_004485_1_1_5"/>
<dbReference type="OrthoDB" id="9803884at2"/>
<dbReference type="Proteomes" id="UP000008320">
    <property type="component" value="Chromosome"/>
</dbReference>
<dbReference type="GO" id="GO:0005829">
    <property type="term" value="C:cytosol"/>
    <property type="evidence" value="ECO:0007669"/>
    <property type="project" value="TreeGrafter"/>
</dbReference>
<dbReference type="GO" id="GO:0004813">
    <property type="term" value="F:alanine-tRNA ligase activity"/>
    <property type="evidence" value="ECO:0007669"/>
    <property type="project" value="UniProtKB-UniRule"/>
</dbReference>
<dbReference type="GO" id="GO:0002161">
    <property type="term" value="F:aminoacyl-tRNA deacylase activity"/>
    <property type="evidence" value="ECO:0007669"/>
    <property type="project" value="TreeGrafter"/>
</dbReference>
<dbReference type="GO" id="GO:0005524">
    <property type="term" value="F:ATP binding"/>
    <property type="evidence" value="ECO:0007669"/>
    <property type="project" value="UniProtKB-UniRule"/>
</dbReference>
<dbReference type="GO" id="GO:0000049">
    <property type="term" value="F:tRNA binding"/>
    <property type="evidence" value="ECO:0007669"/>
    <property type="project" value="UniProtKB-KW"/>
</dbReference>
<dbReference type="GO" id="GO:0008270">
    <property type="term" value="F:zinc ion binding"/>
    <property type="evidence" value="ECO:0007669"/>
    <property type="project" value="UniProtKB-UniRule"/>
</dbReference>
<dbReference type="GO" id="GO:0006419">
    <property type="term" value="P:alanyl-tRNA aminoacylation"/>
    <property type="evidence" value="ECO:0007669"/>
    <property type="project" value="UniProtKB-UniRule"/>
</dbReference>
<dbReference type="GO" id="GO:0045892">
    <property type="term" value="P:negative regulation of DNA-templated transcription"/>
    <property type="evidence" value="ECO:0007669"/>
    <property type="project" value="TreeGrafter"/>
</dbReference>
<dbReference type="CDD" id="cd00673">
    <property type="entry name" value="AlaRS_core"/>
    <property type="match status" value="1"/>
</dbReference>
<dbReference type="FunFam" id="3.30.930.10:FF:000004">
    <property type="entry name" value="Alanine--tRNA ligase"/>
    <property type="match status" value="1"/>
</dbReference>
<dbReference type="FunFam" id="3.30.980.10:FF:000004">
    <property type="entry name" value="Alanine--tRNA ligase, cytoplasmic"/>
    <property type="match status" value="1"/>
</dbReference>
<dbReference type="Gene3D" id="2.40.30.130">
    <property type="match status" value="1"/>
</dbReference>
<dbReference type="Gene3D" id="3.10.310.40">
    <property type="match status" value="1"/>
</dbReference>
<dbReference type="Gene3D" id="3.30.54.20">
    <property type="match status" value="1"/>
</dbReference>
<dbReference type="Gene3D" id="3.30.930.10">
    <property type="entry name" value="Bira Bifunctional Protein, Domain 2"/>
    <property type="match status" value="1"/>
</dbReference>
<dbReference type="Gene3D" id="3.30.980.10">
    <property type="entry name" value="Threonyl-trna Synthetase, Chain A, domain 2"/>
    <property type="match status" value="1"/>
</dbReference>
<dbReference type="HAMAP" id="MF_00036_B">
    <property type="entry name" value="Ala_tRNA_synth_B"/>
    <property type="match status" value="1"/>
</dbReference>
<dbReference type="InterPro" id="IPR045864">
    <property type="entry name" value="aa-tRNA-synth_II/BPL/LPL"/>
</dbReference>
<dbReference type="InterPro" id="IPR002318">
    <property type="entry name" value="Ala-tRNA-lgiase_IIc"/>
</dbReference>
<dbReference type="InterPro" id="IPR018162">
    <property type="entry name" value="Ala-tRNA-ligase_IIc_anticod-bd"/>
</dbReference>
<dbReference type="InterPro" id="IPR018165">
    <property type="entry name" value="Ala-tRNA-synth_IIc_core"/>
</dbReference>
<dbReference type="InterPro" id="IPR018164">
    <property type="entry name" value="Ala-tRNA-synth_IIc_N"/>
</dbReference>
<dbReference type="InterPro" id="IPR050058">
    <property type="entry name" value="Ala-tRNA_ligase"/>
</dbReference>
<dbReference type="InterPro" id="IPR023033">
    <property type="entry name" value="Ala_tRNA_ligase_euk/bac"/>
</dbReference>
<dbReference type="InterPro" id="IPR018163">
    <property type="entry name" value="Thr/Ala-tRNA-synth_IIc_edit"/>
</dbReference>
<dbReference type="InterPro" id="IPR009000">
    <property type="entry name" value="Transl_B-barrel_sf"/>
</dbReference>
<dbReference type="InterPro" id="IPR012947">
    <property type="entry name" value="tRNA_SAD"/>
</dbReference>
<dbReference type="NCBIfam" id="TIGR00344">
    <property type="entry name" value="alaS"/>
    <property type="match status" value="1"/>
</dbReference>
<dbReference type="PANTHER" id="PTHR11777:SF9">
    <property type="entry name" value="ALANINE--TRNA LIGASE, CYTOPLASMIC"/>
    <property type="match status" value="1"/>
</dbReference>
<dbReference type="PANTHER" id="PTHR11777">
    <property type="entry name" value="ALANYL-TRNA SYNTHETASE"/>
    <property type="match status" value="1"/>
</dbReference>
<dbReference type="Pfam" id="PF01411">
    <property type="entry name" value="tRNA-synt_2c"/>
    <property type="match status" value="1"/>
</dbReference>
<dbReference type="Pfam" id="PF07973">
    <property type="entry name" value="tRNA_SAD"/>
    <property type="match status" value="1"/>
</dbReference>
<dbReference type="PRINTS" id="PR00980">
    <property type="entry name" value="TRNASYNTHALA"/>
</dbReference>
<dbReference type="SMART" id="SM00863">
    <property type="entry name" value="tRNA_SAD"/>
    <property type="match status" value="1"/>
</dbReference>
<dbReference type="SUPFAM" id="SSF55681">
    <property type="entry name" value="Class II aaRS and biotin synthetases"/>
    <property type="match status" value="1"/>
</dbReference>
<dbReference type="SUPFAM" id="SSF101353">
    <property type="entry name" value="Putative anticodon-binding domain of alanyl-tRNA synthetase (AlaRS)"/>
    <property type="match status" value="1"/>
</dbReference>
<dbReference type="SUPFAM" id="SSF55186">
    <property type="entry name" value="ThrRS/AlaRS common domain"/>
    <property type="match status" value="1"/>
</dbReference>
<dbReference type="SUPFAM" id="SSF50447">
    <property type="entry name" value="Translation proteins"/>
    <property type="match status" value="1"/>
</dbReference>
<dbReference type="PROSITE" id="PS50860">
    <property type="entry name" value="AA_TRNA_LIGASE_II_ALA"/>
    <property type="match status" value="1"/>
</dbReference>
<evidence type="ECO:0000255" key="1">
    <source>
        <dbReference type="HAMAP-Rule" id="MF_00036"/>
    </source>
</evidence>
<protein>
    <recommendedName>
        <fullName evidence="1">Alanine--tRNA ligase</fullName>
        <ecNumber evidence="1">6.1.1.7</ecNumber>
    </recommendedName>
    <alternativeName>
        <fullName evidence="1">Alanyl-tRNA synthetase</fullName>
        <shortName evidence="1">AlaRS</shortName>
    </alternativeName>
</protein>